<comment type="function">
    <text evidence="1 4">Sequence-specific DNA-binding transcription factor (By similarity). Plays a role in oocyte development, acting cell-autonomously in the somatic gonad (PubMed:20736289). Involved in negative regulation of oocyte MAPK activation and inhibits oocyte maturation and ovulation (PubMed:20736289).</text>
</comment>
<comment type="subcellular location">
    <subcellularLocation>
        <location evidence="4">Nucleus</location>
    </subcellularLocation>
    <subcellularLocation>
        <location evidence="4">Cytoplasm</location>
        <location evidence="4">Perinuclear region</location>
    </subcellularLocation>
    <text evidence="4">Perinuclear localization only observed in sperm.</text>
</comment>
<comment type="tissue specificity">
    <text evidence="4">Expressed in sheath cells and distal tip cells of the somatic gonad, as well as in the intestine and sperm (at protein level) (PubMed:20736289). Expression not observed in oocytes (at protein level) (PubMed:20736289).</text>
</comment>
<comment type="disruption phenotype">
    <text evidence="4">RNAi-mediated knockdown causes abnormalities in oocyte development, including degrading oocytes in the proximal gonadal arm and ectopic developing oocytes in the distal arm (PubMed:20736289). RNAi-mediated knockdown targeted to the soma, on an rrf-1 mutant background, exhibits only a slight increase in the frequency of oocyte defects (PubMed:20736289).</text>
</comment>
<comment type="similarity">
    <text evidence="6">Belongs to the EGR C2H2-type zinc-finger protein family.</text>
</comment>
<evidence type="ECO:0000250" key="1">
    <source>
        <dbReference type="UniProtKB" id="P11161"/>
    </source>
</evidence>
<evidence type="ECO:0000255" key="2">
    <source>
        <dbReference type="PROSITE-ProRule" id="PRU00042"/>
    </source>
</evidence>
<evidence type="ECO:0000256" key="3">
    <source>
        <dbReference type="SAM" id="MobiDB-lite"/>
    </source>
</evidence>
<evidence type="ECO:0000269" key="4">
    <source>
    </source>
</evidence>
<evidence type="ECO:0000303" key="5">
    <source>
    </source>
</evidence>
<evidence type="ECO:0000305" key="6"/>
<evidence type="ECO:0000312" key="7">
    <source>
        <dbReference type="Proteomes" id="UP000001940"/>
    </source>
</evidence>
<evidence type="ECO:0000312" key="8">
    <source>
        <dbReference type="WormBase" id="C27C12.2"/>
    </source>
</evidence>
<gene>
    <name evidence="8" type="primary">egrh-1</name>
    <name evidence="8" type="ORF">C27C12.2</name>
</gene>
<feature type="chain" id="PRO_0000453359" description="Early growth response factor homolog 1">
    <location>
        <begin position="1"/>
        <end position="461"/>
    </location>
</feature>
<feature type="zinc finger region" description="C2H2-type 1" evidence="2">
    <location>
        <begin position="374"/>
        <end position="398"/>
    </location>
</feature>
<feature type="zinc finger region" description="C2H2-type 2" evidence="2">
    <location>
        <begin position="404"/>
        <end position="426"/>
    </location>
</feature>
<feature type="zinc finger region" description="C2H2-type 3" evidence="2">
    <location>
        <begin position="432"/>
        <end position="454"/>
    </location>
</feature>
<feature type="region of interest" description="Disordered" evidence="3">
    <location>
        <begin position="1"/>
        <end position="25"/>
    </location>
</feature>
<feature type="region of interest" description="Disordered" evidence="3">
    <location>
        <begin position="96"/>
        <end position="152"/>
    </location>
</feature>
<feature type="region of interest" description="Disordered" evidence="3">
    <location>
        <begin position="232"/>
        <end position="308"/>
    </location>
</feature>
<feature type="compositionally biased region" description="Polar residues" evidence="3">
    <location>
        <begin position="96"/>
        <end position="105"/>
    </location>
</feature>
<feature type="compositionally biased region" description="Polar residues" evidence="3">
    <location>
        <begin position="129"/>
        <end position="144"/>
    </location>
</feature>
<feature type="compositionally biased region" description="Polar residues" evidence="3">
    <location>
        <begin position="249"/>
        <end position="265"/>
    </location>
</feature>
<feature type="compositionally biased region" description="Polar residues" evidence="3">
    <location>
        <begin position="272"/>
        <end position="291"/>
    </location>
</feature>
<feature type="compositionally biased region" description="Low complexity" evidence="3">
    <location>
        <begin position="299"/>
        <end position="308"/>
    </location>
</feature>
<protein>
    <recommendedName>
        <fullName evidence="5">Early growth response factor homolog 1</fullName>
    </recommendedName>
</protein>
<reference evidence="7" key="1">
    <citation type="journal article" date="1998" name="Science">
        <title>Genome sequence of the nematode C. elegans: a platform for investigating biology.</title>
        <authorList>
            <consortium name="The C. elegans sequencing consortium"/>
        </authorList>
    </citation>
    <scope>NUCLEOTIDE SEQUENCE [LARGE SCALE GENOMIC DNA]</scope>
    <source>
        <strain evidence="7">Bristol N2</strain>
    </source>
</reference>
<reference evidence="6" key="2">
    <citation type="journal article" date="2010" name="Development">
        <title>The EGR family gene egrh-1 functions non-autonomously in the control of oocyte meiotic maturation and ovulation in C. elegans.</title>
        <authorList>
            <person name="Clary L.M."/>
            <person name="Okkema P.G."/>
        </authorList>
    </citation>
    <scope>FUNCTION</scope>
    <scope>SUBCELLULAR LOCATION</scope>
    <scope>TISSUE SPECIFICITY</scope>
    <scope>DISRUPTION PHENOTYPE</scope>
</reference>
<accession>Q18250</accession>
<organism evidence="7">
    <name type="scientific">Caenorhabditis elegans</name>
    <dbReference type="NCBI Taxonomy" id="6239"/>
    <lineage>
        <taxon>Eukaryota</taxon>
        <taxon>Metazoa</taxon>
        <taxon>Ecdysozoa</taxon>
        <taxon>Nematoda</taxon>
        <taxon>Chromadorea</taxon>
        <taxon>Rhabditida</taxon>
        <taxon>Rhabditina</taxon>
        <taxon>Rhabditomorpha</taxon>
        <taxon>Rhabditoidea</taxon>
        <taxon>Rhabditidae</taxon>
        <taxon>Peloderinae</taxon>
        <taxon>Caenorhabditis</taxon>
    </lineage>
</organism>
<sequence length="461" mass="51402">MALHEPPSKLNRHSHSNLLKPPSLNKPILTFADNDCLKTPTMNDMLKTPTVNSPRHTPMNIDGTPKVNGFSGFTPQTDQKFFGEHEPLFNQMHTTTLMPAPSSSYKEPAYSSEQPSSSSDEAKPKELLGSNSFGVPRMTNGNSKQKPEELTLKDIEISSTGPGGVDSPGLSAAMFQFSPMVEHFLQNLTNKAGLPELVVDSKTAGLNHQEPSDLIKSVQVRRSSIEDQKFSDVLHVPTLPRKTSEPSHLGSSLQNEHPQSNSRPSTVIPRVQRTNTSASLTRSMDHSSMSPISAHDDPYSNSASYSSLSTHTSFSDSASLAHFEPKTEPMDDYSYNFSDNDFNSFEFSSTSEELKNIGCQKMKSSKMPLQDRPYKCPRDGCDRRFSRSDELTRHIRIHTGQKPFQCRICMRAFSRSDHLTTHVRTHTGEKPFSCDICGRKFARSDERKRHTKVHKTSRSGS</sequence>
<name>EGRH1_CAEEL</name>
<keyword id="KW-0963">Cytoplasm</keyword>
<keyword id="KW-0238">DNA-binding</keyword>
<keyword id="KW-0479">Metal-binding</keyword>
<keyword id="KW-0539">Nucleus</keyword>
<keyword id="KW-1185">Reference proteome</keyword>
<keyword id="KW-0677">Repeat</keyword>
<keyword id="KW-0804">Transcription</keyword>
<keyword id="KW-0805">Transcription regulation</keyword>
<keyword id="KW-0862">Zinc</keyword>
<keyword id="KW-0863">Zinc-finger</keyword>
<dbReference type="EMBL" id="BX284606">
    <property type="protein sequence ID" value="CAA93744.2"/>
    <property type="molecule type" value="Genomic_DNA"/>
</dbReference>
<dbReference type="PIR" id="T19515">
    <property type="entry name" value="T19515"/>
</dbReference>
<dbReference type="RefSeq" id="NP_510462.2">
    <property type="nucleotide sequence ID" value="NM_078061.6"/>
</dbReference>
<dbReference type="SMR" id="Q18250"/>
<dbReference type="FunCoup" id="Q18250">
    <property type="interactions" value="34"/>
</dbReference>
<dbReference type="STRING" id="6239.C27C12.2.1"/>
<dbReference type="PaxDb" id="6239-C27C12.2"/>
<dbReference type="PeptideAtlas" id="Q18250"/>
<dbReference type="EnsemblMetazoa" id="C27C12.2.1">
    <property type="protein sequence ID" value="C27C12.2.1"/>
    <property type="gene ID" value="WBGene00007772"/>
</dbReference>
<dbReference type="GeneID" id="181580"/>
<dbReference type="KEGG" id="cel:CELE_C27C12.2"/>
<dbReference type="UCSC" id="C27C12.2">
    <property type="organism name" value="c. elegans"/>
</dbReference>
<dbReference type="AGR" id="WB:WBGene00007772"/>
<dbReference type="CTD" id="181580"/>
<dbReference type="WormBase" id="C27C12.2">
    <property type="protein sequence ID" value="CE40601"/>
    <property type="gene ID" value="WBGene00007772"/>
    <property type="gene designation" value="egrh-1"/>
</dbReference>
<dbReference type="eggNOG" id="KOG1721">
    <property type="taxonomic scope" value="Eukaryota"/>
</dbReference>
<dbReference type="GeneTree" id="ENSGT00940000169836"/>
<dbReference type="HOGENOM" id="CLU_552347_0_0_1"/>
<dbReference type="InParanoid" id="Q18250"/>
<dbReference type="OMA" id="YKCPIEN"/>
<dbReference type="OrthoDB" id="10018191at2759"/>
<dbReference type="Reactome" id="R-CEL-9031628">
    <property type="pathway name" value="NGF-stimulated transcription"/>
</dbReference>
<dbReference type="PRO" id="PR:Q18250"/>
<dbReference type="Proteomes" id="UP000001940">
    <property type="component" value="Chromosome X"/>
</dbReference>
<dbReference type="Bgee" id="WBGene00007772">
    <property type="expression patterns" value="Expressed in pharyngeal muscle cell (C elegans) and 4 other cell types or tissues"/>
</dbReference>
<dbReference type="GO" id="GO:0005634">
    <property type="term" value="C:nucleus"/>
    <property type="evidence" value="ECO:0000314"/>
    <property type="project" value="WormBase"/>
</dbReference>
<dbReference type="GO" id="GO:0048471">
    <property type="term" value="C:perinuclear region of cytoplasm"/>
    <property type="evidence" value="ECO:0000314"/>
    <property type="project" value="WormBase"/>
</dbReference>
<dbReference type="GO" id="GO:0000981">
    <property type="term" value="F:DNA-binding transcription factor activity, RNA polymerase II-specific"/>
    <property type="evidence" value="ECO:0000318"/>
    <property type="project" value="GO_Central"/>
</dbReference>
<dbReference type="GO" id="GO:0000978">
    <property type="term" value="F:RNA polymerase II cis-regulatory region sequence-specific DNA binding"/>
    <property type="evidence" value="ECO:0000318"/>
    <property type="project" value="GO_Central"/>
</dbReference>
<dbReference type="GO" id="GO:0008270">
    <property type="term" value="F:zinc ion binding"/>
    <property type="evidence" value="ECO:0007669"/>
    <property type="project" value="UniProtKB-KW"/>
</dbReference>
<dbReference type="GO" id="GO:1900194">
    <property type="term" value="P:negative regulation of oocyte maturation"/>
    <property type="evidence" value="ECO:0000315"/>
    <property type="project" value="WormBase"/>
</dbReference>
<dbReference type="GO" id="GO:0060280">
    <property type="term" value="P:negative regulation of ovulation"/>
    <property type="evidence" value="ECO:0000315"/>
    <property type="project" value="WormBase"/>
</dbReference>
<dbReference type="GO" id="GO:0006357">
    <property type="term" value="P:regulation of transcription by RNA polymerase II"/>
    <property type="evidence" value="ECO:0000318"/>
    <property type="project" value="GO_Central"/>
</dbReference>
<dbReference type="FunFam" id="3.30.160.60:FF:000092">
    <property type="entry name" value="Early growth response protein 3"/>
    <property type="match status" value="1"/>
</dbReference>
<dbReference type="Gene3D" id="3.30.160.60">
    <property type="entry name" value="Classic Zinc Finger"/>
    <property type="match status" value="3"/>
</dbReference>
<dbReference type="InterPro" id="IPR036236">
    <property type="entry name" value="Znf_C2H2_sf"/>
</dbReference>
<dbReference type="InterPro" id="IPR013087">
    <property type="entry name" value="Znf_C2H2_type"/>
</dbReference>
<dbReference type="PANTHER" id="PTHR23235">
    <property type="entry name" value="KRUEPPEL-LIKE TRANSCRIPTION FACTOR"/>
    <property type="match status" value="1"/>
</dbReference>
<dbReference type="PANTHER" id="PTHR23235:SF60">
    <property type="entry name" value="STRIPE, ISOFORM D"/>
    <property type="match status" value="1"/>
</dbReference>
<dbReference type="Pfam" id="PF00096">
    <property type="entry name" value="zf-C2H2"/>
    <property type="match status" value="3"/>
</dbReference>
<dbReference type="SMART" id="SM00355">
    <property type="entry name" value="ZnF_C2H2"/>
    <property type="match status" value="3"/>
</dbReference>
<dbReference type="SUPFAM" id="SSF57667">
    <property type="entry name" value="beta-beta-alpha zinc fingers"/>
    <property type="match status" value="2"/>
</dbReference>
<dbReference type="PROSITE" id="PS00028">
    <property type="entry name" value="ZINC_FINGER_C2H2_1"/>
    <property type="match status" value="3"/>
</dbReference>
<dbReference type="PROSITE" id="PS50157">
    <property type="entry name" value="ZINC_FINGER_C2H2_2"/>
    <property type="match status" value="3"/>
</dbReference>
<proteinExistence type="evidence at protein level"/>